<keyword id="KW-0378">Hydrolase</keyword>
<keyword id="KW-0479">Metal-binding</keyword>
<keyword id="KW-0862">Zinc</keyword>
<protein>
    <recommendedName>
        <fullName evidence="1">Hydroxyacylglutathione hydrolase</fullName>
        <ecNumber evidence="1">3.1.2.6</ecNumber>
    </recommendedName>
    <alternativeName>
        <fullName evidence="1">Glyoxalase II</fullName>
        <shortName evidence="1">Glx II</shortName>
    </alternativeName>
</protein>
<name>GLO2_BRUAB</name>
<reference key="1">
    <citation type="journal article" date="2005" name="J. Bacteriol.">
        <title>Completion of the genome sequence of Brucella abortus and comparison to the highly similar genomes of Brucella melitensis and Brucella suis.</title>
        <authorList>
            <person name="Halling S.M."/>
            <person name="Peterson-Burch B.D."/>
            <person name="Bricker B.J."/>
            <person name="Zuerner R.L."/>
            <person name="Qing Z."/>
            <person name="Li L.-L."/>
            <person name="Kapur V."/>
            <person name="Alt D.P."/>
            <person name="Olsen S.C."/>
        </authorList>
    </citation>
    <scope>NUCLEOTIDE SEQUENCE [LARGE SCALE GENOMIC DNA]</scope>
    <source>
        <strain>9-941</strain>
    </source>
</reference>
<proteinExistence type="inferred from homology"/>
<comment type="function">
    <text evidence="1">Thiolesterase that catalyzes the hydrolysis of S-D-lactoyl-glutathione to form glutathione and D-lactic acid.</text>
</comment>
<comment type="catalytic activity">
    <reaction evidence="1">
        <text>an S-(2-hydroxyacyl)glutathione + H2O = a 2-hydroxy carboxylate + glutathione + H(+)</text>
        <dbReference type="Rhea" id="RHEA:21864"/>
        <dbReference type="ChEBI" id="CHEBI:15377"/>
        <dbReference type="ChEBI" id="CHEBI:15378"/>
        <dbReference type="ChEBI" id="CHEBI:57925"/>
        <dbReference type="ChEBI" id="CHEBI:58896"/>
        <dbReference type="ChEBI" id="CHEBI:71261"/>
        <dbReference type="EC" id="3.1.2.6"/>
    </reaction>
</comment>
<comment type="cofactor">
    <cofactor evidence="1">
        <name>Zn(2+)</name>
        <dbReference type="ChEBI" id="CHEBI:29105"/>
    </cofactor>
    <text evidence="1">Binds 2 Zn(2+) ions per subunit.</text>
</comment>
<comment type="pathway">
    <text evidence="1">Secondary metabolite metabolism; methylglyoxal degradation; (R)-lactate from methylglyoxal: step 2/2.</text>
</comment>
<comment type="subunit">
    <text evidence="1">Monomer.</text>
</comment>
<comment type="similarity">
    <text evidence="1">Belongs to the metallo-beta-lactamase superfamily. Glyoxalase II family.</text>
</comment>
<gene>
    <name evidence="1" type="primary">gloB</name>
    <name type="ordered locus">BruAb1_1912</name>
</gene>
<dbReference type="EC" id="3.1.2.6" evidence="1"/>
<dbReference type="EMBL" id="AE017223">
    <property type="protein sequence ID" value="AAX75222.1"/>
    <property type="molecule type" value="Genomic_DNA"/>
</dbReference>
<dbReference type="SMR" id="Q57AW2"/>
<dbReference type="EnsemblBacteria" id="AAX75222">
    <property type="protein sequence ID" value="AAX75222"/>
    <property type="gene ID" value="BruAb1_1912"/>
</dbReference>
<dbReference type="KEGG" id="bmb:BruAb1_1912"/>
<dbReference type="HOGENOM" id="CLU_030571_4_1_5"/>
<dbReference type="UniPathway" id="UPA00619">
    <property type="reaction ID" value="UER00676"/>
</dbReference>
<dbReference type="Proteomes" id="UP000000540">
    <property type="component" value="Chromosome I"/>
</dbReference>
<dbReference type="GO" id="GO:0004416">
    <property type="term" value="F:hydroxyacylglutathione hydrolase activity"/>
    <property type="evidence" value="ECO:0007669"/>
    <property type="project" value="UniProtKB-UniRule"/>
</dbReference>
<dbReference type="GO" id="GO:0046872">
    <property type="term" value="F:metal ion binding"/>
    <property type="evidence" value="ECO:0007669"/>
    <property type="project" value="UniProtKB-KW"/>
</dbReference>
<dbReference type="GO" id="GO:0019243">
    <property type="term" value="P:methylglyoxal catabolic process to D-lactate via S-lactoyl-glutathione"/>
    <property type="evidence" value="ECO:0007669"/>
    <property type="project" value="InterPro"/>
</dbReference>
<dbReference type="CDD" id="cd07723">
    <property type="entry name" value="hydroxyacylglutathione_hydrolase_MBL-fold"/>
    <property type="match status" value="1"/>
</dbReference>
<dbReference type="Gene3D" id="3.60.15.10">
    <property type="entry name" value="Ribonuclease Z/Hydroxyacylglutathione hydrolase-like"/>
    <property type="match status" value="1"/>
</dbReference>
<dbReference type="HAMAP" id="MF_01374">
    <property type="entry name" value="Glyoxalase_2"/>
    <property type="match status" value="1"/>
</dbReference>
<dbReference type="InterPro" id="IPR035680">
    <property type="entry name" value="Clx_II_MBL"/>
</dbReference>
<dbReference type="InterPro" id="IPR050110">
    <property type="entry name" value="Glyoxalase_II_hydrolase"/>
</dbReference>
<dbReference type="InterPro" id="IPR032282">
    <property type="entry name" value="HAGH_C"/>
</dbReference>
<dbReference type="InterPro" id="IPR017782">
    <property type="entry name" value="Hydroxyacylglutathione_Hdrlase"/>
</dbReference>
<dbReference type="InterPro" id="IPR001279">
    <property type="entry name" value="Metallo-B-lactamas"/>
</dbReference>
<dbReference type="InterPro" id="IPR036866">
    <property type="entry name" value="RibonucZ/Hydroxyglut_hydro"/>
</dbReference>
<dbReference type="NCBIfam" id="TIGR03413">
    <property type="entry name" value="GSH_gloB"/>
    <property type="match status" value="1"/>
</dbReference>
<dbReference type="PANTHER" id="PTHR43705">
    <property type="entry name" value="HYDROXYACYLGLUTATHIONE HYDROLASE"/>
    <property type="match status" value="1"/>
</dbReference>
<dbReference type="PANTHER" id="PTHR43705:SF1">
    <property type="entry name" value="HYDROXYACYLGLUTATHIONE HYDROLASE GLOB"/>
    <property type="match status" value="1"/>
</dbReference>
<dbReference type="Pfam" id="PF16123">
    <property type="entry name" value="HAGH_C"/>
    <property type="match status" value="1"/>
</dbReference>
<dbReference type="Pfam" id="PF00753">
    <property type="entry name" value="Lactamase_B"/>
    <property type="match status" value="1"/>
</dbReference>
<dbReference type="PIRSF" id="PIRSF005457">
    <property type="entry name" value="Glx"/>
    <property type="match status" value="1"/>
</dbReference>
<dbReference type="SMART" id="SM00849">
    <property type="entry name" value="Lactamase_B"/>
    <property type="match status" value="1"/>
</dbReference>
<dbReference type="SUPFAM" id="SSF56281">
    <property type="entry name" value="Metallo-hydrolase/oxidoreductase"/>
    <property type="match status" value="1"/>
</dbReference>
<evidence type="ECO:0000255" key="1">
    <source>
        <dbReference type="HAMAP-Rule" id="MF_01374"/>
    </source>
</evidence>
<sequence>MEQRLEIEQFICRSDNYGVLIHDPESALTATIDAPDAYAIEAALERRGWTLDFIFTTHHHLDHVEGNEPLKEKFGVSIIGPEAEKAKIPGIDRTVKGGDEFTFGLFKVKVISTPGHTAGGISYYLPDAKVVFTGDTLFALGCGRLFEGTPATMFHSLEKLVALPGDTALYCGHEYTQNNARFALTIDPDNSALKERAKEIARLRAHERMTLPSTIALEMATNPFLRWHDRTIRARLGLQDAPDEAVFAEIRKRKDMF</sequence>
<feature type="chain" id="PRO_0000309631" description="Hydroxyacylglutathione hydrolase">
    <location>
        <begin position="1"/>
        <end position="257"/>
    </location>
</feature>
<feature type="binding site" evidence="1">
    <location>
        <position position="58"/>
    </location>
    <ligand>
        <name>Zn(2+)</name>
        <dbReference type="ChEBI" id="CHEBI:29105"/>
        <label>1</label>
    </ligand>
</feature>
<feature type="binding site" evidence="1">
    <location>
        <position position="60"/>
    </location>
    <ligand>
        <name>Zn(2+)</name>
        <dbReference type="ChEBI" id="CHEBI:29105"/>
        <label>1</label>
    </ligand>
</feature>
<feature type="binding site" evidence="1">
    <location>
        <position position="62"/>
    </location>
    <ligand>
        <name>Zn(2+)</name>
        <dbReference type="ChEBI" id="CHEBI:29105"/>
        <label>2</label>
    </ligand>
</feature>
<feature type="binding site" evidence="1">
    <location>
        <position position="63"/>
    </location>
    <ligand>
        <name>Zn(2+)</name>
        <dbReference type="ChEBI" id="CHEBI:29105"/>
        <label>2</label>
    </ligand>
</feature>
<feature type="binding site" evidence="1">
    <location>
        <position position="116"/>
    </location>
    <ligand>
        <name>Zn(2+)</name>
        <dbReference type="ChEBI" id="CHEBI:29105"/>
        <label>1</label>
    </ligand>
</feature>
<feature type="binding site" evidence="1">
    <location>
        <position position="135"/>
    </location>
    <ligand>
        <name>Zn(2+)</name>
        <dbReference type="ChEBI" id="CHEBI:29105"/>
        <label>1</label>
    </ligand>
</feature>
<feature type="binding site" evidence="1">
    <location>
        <position position="135"/>
    </location>
    <ligand>
        <name>Zn(2+)</name>
        <dbReference type="ChEBI" id="CHEBI:29105"/>
        <label>2</label>
    </ligand>
</feature>
<feature type="binding site" evidence="1">
    <location>
        <position position="173"/>
    </location>
    <ligand>
        <name>Zn(2+)</name>
        <dbReference type="ChEBI" id="CHEBI:29105"/>
        <label>2</label>
    </ligand>
</feature>
<accession>Q57AW2</accession>
<organism>
    <name type="scientific">Brucella abortus biovar 1 (strain 9-941)</name>
    <dbReference type="NCBI Taxonomy" id="262698"/>
    <lineage>
        <taxon>Bacteria</taxon>
        <taxon>Pseudomonadati</taxon>
        <taxon>Pseudomonadota</taxon>
        <taxon>Alphaproteobacteria</taxon>
        <taxon>Hyphomicrobiales</taxon>
        <taxon>Brucellaceae</taxon>
        <taxon>Brucella/Ochrobactrum group</taxon>
        <taxon>Brucella</taxon>
    </lineage>
</organism>